<dbReference type="EMBL" id="CP000673">
    <property type="protein sequence ID" value="EDK32921.1"/>
    <property type="molecule type" value="Genomic_DNA"/>
</dbReference>
<dbReference type="RefSeq" id="WP_012101248.1">
    <property type="nucleotide sequence ID" value="NC_009706.1"/>
</dbReference>
<dbReference type="SMR" id="A5N6J0"/>
<dbReference type="STRING" id="431943.CKL_0870"/>
<dbReference type="KEGG" id="ckl:CKL_0870"/>
<dbReference type="eggNOG" id="COG0850">
    <property type="taxonomic scope" value="Bacteria"/>
</dbReference>
<dbReference type="HOGENOM" id="CLU_048711_2_0_9"/>
<dbReference type="Proteomes" id="UP000002411">
    <property type="component" value="Chromosome"/>
</dbReference>
<dbReference type="GO" id="GO:0000902">
    <property type="term" value="P:cell morphogenesis"/>
    <property type="evidence" value="ECO:0007669"/>
    <property type="project" value="InterPro"/>
</dbReference>
<dbReference type="GO" id="GO:0000917">
    <property type="term" value="P:division septum assembly"/>
    <property type="evidence" value="ECO:0007669"/>
    <property type="project" value="UniProtKB-KW"/>
</dbReference>
<dbReference type="GO" id="GO:1901891">
    <property type="term" value="P:regulation of cell septum assembly"/>
    <property type="evidence" value="ECO:0007669"/>
    <property type="project" value="InterPro"/>
</dbReference>
<dbReference type="Gene3D" id="2.160.20.70">
    <property type="match status" value="1"/>
</dbReference>
<dbReference type="Gene3D" id="3.30.160.540">
    <property type="match status" value="1"/>
</dbReference>
<dbReference type="HAMAP" id="MF_00267">
    <property type="entry name" value="MinC"/>
    <property type="match status" value="1"/>
</dbReference>
<dbReference type="InterPro" id="IPR016098">
    <property type="entry name" value="CAP/MinC_C"/>
</dbReference>
<dbReference type="InterPro" id="IPR013033">
    <property type="entry name" value="MinC"/>
</dbReference>
<dbReference type="InterPro" id="IPR036145">
    <property type="entry name" value="MinC_C_sf"/>
</dbReference>
<dbReference type="InterPro" id="IPR055219">
    <property type="entry name" value="MinC_N_1"/>
</dbReference>
<dbReference type="InterPro" id="IPR005526">
    <property type="entry name" value="Septum_form_inhib_MinC_C"/>
</dbReference>
<dbReference type="NCBIfam" id="TIGR01222">
    <property type="entry name" value="minC"/>
    <property type="match status" value="1"/>
</dbReference>
<dbReference type="NCBIfam" id="NF001775">
    <property type="entry name" value="PRK00513.1-6"/>
    <property type="match status" value="1"/>
</dbReference>
<dbReference type="PANTHER" id="PTHR34108">
    <property type="entry name" value="SEPTUM SITE-DETERMINING PROTEIN MINC"/>
    <property type="match status" value="1"/>
</dbReference>
<dbReference type="PANTHER" id="PTHR34108:SF1">
    <property type="entry name" value="SEPTUM SITE-DETERMINING PROTEIN MINC"/>
    <property type="match status" value="1"/>
</dbReference>
<dbReference type="Pfam" id="PF03775">
    <property type="entry name" value="MinC_C"/>
    <property type="match status" value="1"/>
</dbReference>
<dbReference type="Pfam" id="PF22642">
    <property type="entry name" value="MinC_N_1"/>
    <property type="match status" value="1"/>
</dbReference>
<dbReference type="SUPFAM" id="SSF63848">
    <property type="entry name" value="Cell-division inhibitor MinC, C-terminal domain"/>
    <property type="match status" value="1"/>
</dbReference>
<gene>
    <name evidence="1" type="primary">minC</name>
    <name type="ordered locus">CKL_0870</name>
</gene>
<reference key="1">
    <citation type="journal article" date="2008" name="Proc. Natl. Acad. Sci. U.S.A.">
        <title>The genome of Clostridium kluyveri, a strict anaerobe with unique metabolic features.</title>
        <authorList>
            <person name="Seedorf H."/>
            <person name="Fricke W.F."/>
            <person name="Veith B."/>
            <person name="Brueggemann H."/>
            <person name="Liesegang H."/>
            <person name="Strittmatter A."/>
            <person name="Miethke M."/>
            <person name="Buckel W."/>
            <person name="Hinderberger J."/>
            <person name="Li F."/>
            <person name="Hagemeier C."/>
            <person name="Thauer R.K."/>
            <person name="Gottschalk G."/>
        </authorList>
    </citation>
    <scope>NUCLEOTIDE SEQUENCE [LARGE SCALE GENOMIC DNA]</scope>
    <source>
        <strain>ATCC 8527 / DSM 555 / NBRC 12016 / NCIMB 10680 / K1</strain>
    </source>
</reference>
<feature type="chain" id="PRO_1000078652" description="Probable septum site-determining protein MinC">
    <location>
        <begin position="1"/>
        <end position="209"/>
    </location>
</feature>
<accession>A5N6J0</accession>
<organism>
    <name type="scientific">Clostridium kluyveri (strain ATCC 8527 / DSM 555 / NBRC 12016 / NCIMB 10680 / K1)</name>
    <dbReference type="NCBI Taxonomy" id="431943"/>
    <lineage>
        <taxon>Bacteria</taxon>
        <taxon>Bacillati</taxon>
        <taxon>Bacillota</taxon>
        <taxon>Clostridia</taxon>
        <taxon>Eubacteriales</taxon>
        <taxon>Clostridiaceae</taxon>
        <taxon>Clostridium</taxon>
    </lineage>
</organism>
<comment type="function">
    <text evidence="1">Cell division inhibitor that blocks the formation of polar Z ring septums. Rapidly oscillates between the poles of the cell to destabilize FtsZ filaments that have formed before they mature into polar Z rings. Prevents FtsZ polymerization.</text>
</comment>
<comment type="subunit">
    <text evidence="1">Interacts with MinD and FtsZ.</text>
</comment>
<comment type="similarity">
    <text evidence="1">Belongs to the MinC family.</text>
</comment>
<name>MINC_CLOK5</name>
<evidence type="ECO:0000255" key="1">
    <source>
        <dbReference type="HAMAP-Rule" id="MF_00267"/>
    </source>
</evidence>
<proteinExistence type="inferred from homology"/>
<sequence length="209" mass="23340">MIDNNILVKGNKEGINIVININKFKDFEEMLEALVKRLSVGKMFYKGCNLKIITDLKNINEKQSVRLKQVLFEKFLIKDCIFEDSNEKPSKIFSGIYEGRTKFLRKTIRGGQVVNYPGNIVIIGDVNAGSEIYVGGNIVVFGALRGYAHAGFGGNSKAIVAAISLEPEMLQIADLVTRSPDNMKPQYPEVAKIRGNIIIVEPYLPNKFI</sequence>
<protein>
    <recommendedName>
        <fullName evidence="1">Probable septum site-determining protein MinC</fullName>
    </recommendedName>
</protein>
<keyword id="KW-0131">Cell cycle</keyword>
<keyword id="KW-0132">Cell division</keyword>
<keyword id="KW-1185">Reference proteome</keyword>
<keyword id="KW-0717">Septation</keyword>